<name>NDPA_PSEF5</name>
<reference key="1">
    <citation type="journal article" date="2005" name="Nat. Biotechnol.">
        <title>Complete genome sequence of the plant commensal Pseudomonas fluorescens Pf-5.</title>
        <authorList>
            <person name="Paulsen I.T."/>
            <person name="Press C.M."/>
            <person name="Ravel J."/>
            <person name="Kobayashi D.Y."/>
            <person name="Myers G.S.A."/>
            <person name="Mavrodi D.V."/>
            <person name="DeBoy R.T."/>
            <person name="Seshadri R."/>
            <person name="Ren Q."/>
            <person name="Madupu R."/>
            <person name="Dodson R.J."/>
            <person name="Durkin A.S."/>
            <person name="Brinkac L.M."/>
            <person name="Daugherty S.C."/>
            <person name="Sullivan S.A."/>
            <person name="Rosovitz M.J."/>
            <person name="Gwinn M.L."/>
            <person name="Zhou L."/>
            <person name="Schneider D.J."/>
            <person name="Cartinhour S.W."/>
            <person name="Nelson W.C."/>
            <person name="Weidman J."/>
            <person name="Watkins K."/>
            <person name="Tran K."/>
            <person name="Khouri H."/>
            <person name="Pierson E.A."/>
            <person name="Pierson L.S. III"/>
            <person name="Thomashow L.S."/>
            <person name="Loper J.E."/>
        </authorList>
    </citation>
    <scope>NUCLEOTIDE SEQUENCE [LARGE SCALE GENOMIC DNA]</scope>
    <source>
        <strain>ATCC BAA-477 / NRRL B-23932 / Pf-5</strain>
    </source>
</reference>
<dbReference type="EMBL" id="CP000076">
    <property type="protein sequence ID" value="AAY90347.1"/>
    <property type="molecule type" value="Genomic_DNA"/>
</dbReference>
<dbReference type="SMR" id="Q4KHU2"/>
<dbReference type="STRING" id="220664.PFL_1060"/>
<dbReference type="KEGG" id="pfl:PFL_1060"/>
<dbReference type="PATRIC" id="fig|220664.5.peg.1088"/>
<dbReference type="eggNOG" id="COG3081">
    <property type="taxonomic scope" value="Bacteria"/>
</dbReference>
<dbReference type="HOGENOM" id="CLU_063050_0_1_6"/>
<dbReference type="Proteomes" id="UP000008540">
    <property type="component" value="Chromosome"/>
</dbReference>
<dbReference type="GO" id="GO:0043590">
    <property type="term" value="C:bacterial nucleoid"/>
    <property type="evidence" value="ECO:0007669"/>
    <property type="project" value="TreeGrafter"/>
</dbReference>
<dbReference type="GO" id="GO:0005737">
    <property type="term" value="C:cytoplasm"/>
    <property type="evidence" value="ECO:0007669"/>
    <property type="project" value="UniProtKB-UniRule"/>
</dbReference>
<dbReference type="GO" id="GO:0003690">
    <property type="term" value="F:double-stranded DNA binding"/>
    <property type="evidence" value="ECO:0007669"/>
    <property type="project" value="TreeGrafter"/>
</dbReference>
<dbReference type="GO" id="GO:0003727">
    <property type="term" value="F:single-stranded RNA binding"/>
    <property type="evidence" value="ECO:0007669"/>
    <property type="project" value="TreeGrafter"/>
</dbReference>
<dbReference type="HAMAP" id="MF_00730">
    <property type="entry name" value="NdpA"/>
    <property type="match status" value="1"/>
</dbReference>
<dbReference type="InterPro" id="IPR007358">
    <property type="entry name" value="Nucleoid_associated_NdpA"/>
</dbReference>
<dbReference type="NCBIfam" id="NF001557">
    <property type="entry name" value="PRK00378.1"/>
    <property type="match status" value="1"/>
</dbReference>
<dbReference type="PANTHER" id="PTHR38772">
    <property type="match status" value="1"/>
</dbReference>
<dbReference type="PANTHER" id="PTHR38772:SF1">
    <property type="entry name" value="NUCLEOID-ASSOCIATED PROTEIN YEJK"/>
    <property type="match status" value="1"/>
</dbReference>
<dbReference type="Pfam" id="PF04245">
    <property type="entry name" value="NA37"/>
    <property type="match status" value="1"/>
</dbReference>
<evidence type="ECO:0000255" key="1">
    <source>
        <dbReference type="HAMAP-Rule" id="MF_00730"/>
    </source>
</evidence>
<accession>Q4KHU2</accession>
<feature type="chain" id="PRO_1000045934" description="Nucleoid-associated protein PFL_1060">
    <location>
        <begin position="1"/>
        <end position="334"/>
    </location>
</feature>
<proteinExistence type="inferred from homology"/>
<keyword id="KW-0963">Cytoplasm</keyword>
<gene>
    <name type="ordered locus">PFL_1060</name>
</gene>
<comment type="subcellular location">
    <subcellularLocation>
        <location evidence="1">Cytoplasm</location>
        <location evidence="1">Nucleoid</location>
    </subcellularLocation>
</comment>
<comment type="similarity">
    <text evidence="1">Belongs to the YejK family.</text>
</comment>
<protein>
    <recommendedName>
        <fullName evidence="1">Nucleoid-associated protein PFL_1060</fullName>
    </recommendedName>
</protein>
<sequence length="334" mass="37433">MPIRHCIVHLIDKKPDGSPAVLHARDSELAESAAIENMLADLNESYNAKQGKAWGLFHPESGAFPFSGWLKEYLDGGQDFTAFSRVAVEHLQKLMEESNLSVGGHVLFAHYQQGMTDYLAIALLHHSEGVAVTDQLDVTPSRHLDLGQLHLAARINISEWQNNKQSKQYISFIKGKNGKKVSEYFRDFIGCQEGVDGPGETRTLLKAFSDFVESEDLPEDSAREKTKTLVDYASSQAKLGEPMGLEELSELIDEDRPKAFYDHIRNKDYGLSPEIPADKRTLNQFRRFTGRAEGLSISFEAHLLGSKIEYDEEAGTLIIKGLPTQLTDQLKRRN</sequence>
<organism>
    <name type="scientific">Pseudomonas fluorescens (strain ATCC BAA-477 / NRRL B-23932 / Pf-5)</name>
    <dbReference type="NCBI Taxonomy" id="220664"/>
    <lineage>
        <taxon>Bacteria</taxon>
        <taxon>Pseudomonadati</taxon>
        <taxon>Pseudomonadota</taxon>
        <taxon>Gammaproteobacteria</taxon>
        <taxon>Pseudomonadales</taxon>
        <taxon>Pseudomonadaceae</taxon>
        <taxon>Pseudomonas</taxon>
    </lineage>
</organism>